<comment type="similarity">
    <text evidence="2">Belongs to the UPF0213 family.</text>
</comment>
<reference key="1">
    <citation type="journal article" date="2006" name="Proc. Natl. Acad. Sci. U.S.A.">
        <title>Comparative genomics of the lactic acid bacteria.</title>
        <authorList>
            <person name="Makarova K.S."/>
            <person name="Slesarev A."/>
            <person name="Wolf Y.I."/>
            <person name="Sorokin A."/>
            <person name="Mirkin B."/>
            <person name="Koonin E.V."/>
            <person name="Pavlov A."/>
            <person name="Pavlova N."/>
            <person name="Karamychev V."/>
            <person name="Polouchine N."/>
            <person name="Shakhova V."/>
            <person name="Grigoriev I."/>
            <person name="Lou Y."/>
            <person name="Rohksar D."/>
            <person name="Lucas S."/>
            <person name="Huang K."/>
            <person name="Goodstein D.M."/>
            <person name="Hawkins T."/>
            <person name="Plengvidhya V."/>
            <person name="Welker D."/>
            <person name="Hughes J."/>
            <person name="Goh Y."/>
            <person name="Benson A."/>
            <person name="Baldwin K."/>
            <person name="Lee J.-H."/>
            <person name="Diaz-Muniz I."/>
            <person name="Dosti B."/>
            <person name="Smeianov V."/>
            <person name="Wechter W."/>
            <person name="Barabote R."/>
            <person name="Lorca G."/>
            <person name="Altermann E."/>
            <person name="Barrangou R."/>
            <person name="Ganesan B."/>
            <person name="Xie Y."/>
            <person name="Rawsthorne H."/>
            <person name="Tamir D."/>
            <person name="Parker C."/>
            <person name="Breidt F."/>
            <person name="Broadbent J.R."/>
            <person name="Hutkins R."/>
            <person name="O'Sullivan D."/>
            <person name="Steele J."/>
            <person name="Unlu G."/>
            <person name="Saier M.H. Jr."/>
            <person name="Klaenhammer T."/>
            <person name="Richardson P."/>
            <person name="Kozyavkin S."/>
            <person name="Weimer B.C."/>
            <person name="Mills D.A."/>
        </authorList>
    </citation>
    <scope>NUCLEOTIDE SEQUENCE [LARGE SCALE GENOMIC DNA]</scope>
    <source>
        <strain>ATCC 25745 / CCUG 21536 / LMG 10740 / 183-1w</strain>
    </source>
</reference>
<organism>
    <name type="scientific">Pediococcus pentosaceus (strain ATCC 25745 / CCUG 21536 / LMG 10740 / 183-1w)</name>
    <dbReference type="NCBI Taxonomy" id="278197"/>
    <lineage>
        <taxon>Bacteria</taxon>
        <taxon>Bacillati</taxon>
        <taxon>Bacillota</taxon>
        <taxon>Bacilli</taxon>
        <taxon>Lactobacillales</taxon>
        <taxon>Lactobacillaceae</taxon>
        <taxon>Pediococcus</taxon>
    </lineage>
</organism>
<proteinExistence type="inferred from homology"/>
<evidence type="ECO:0000255" key="1">
    <source>
        <dbReference type="PROSITE-ProRule" id="PRU00977"/>
    </source>
</evidence>
<evidence type="ECO:0000305" key="2"/>
<gene>
    <name type="ordered locus">PEPE_0875</name>
</gene>
<sequence length="95" mass="11173">MEIPLINGFYFYVLRCADNTLYGGYTINLINRVERHNKGQGAKYTKARRPVQLIYFESFDNQHDAMSAEYQFKQRTRSSKIKFLKKNGISLTNLK</sequence>
<feature type="chain" id="PRO_1000063677" description="UPF0213 protein PEPE_0875">
    <location>
        <begin position="1"/>
        <end position="95"/>
    </location>
</feature>
<feature type="domain" description="GIY-YIG" evidence="1">
    <location>
        <begin position="7"/>
        <end position="82"/>
    </location>
</feature>
<dbReference type="EMBL" id="CP000422">
    <property type="protein sequence ID" value="ABJ67934.1"/>
    <property type="molecule type" value="Genomic_DNA"/>
</dbReference>
<dbReference type="RefSeq" id="WP_011673314.1">
    <property type="nucleotide sequence ID" value="NC_008525.1"/>
</dbReference>
<dbReference type="SMR" id="Q03FT8"/>
<dbReference type="STRING" id="278197.PEPE_0875"/>
<dbReference type="GeneID" id="33062330"/>
<dbReference type="KEGG" id="ppe:PEPE_0875"/>
<dbReference type="eggNOG" id="COG2827">
    <property type="taxonomic scope" value="Bacteria"/>
</dbReference>
<dbReference type="HOGENOM" id="CLU_135650_0_3_9"/>
<dbReference type="OrthoDB" id="9807770at2"/>
<dbReference type="Proteomes" id="UP000000773">
    <property type="component" value="Chromosome"/>
</dbReference>
<dbReference type="CDD" id="cd10456">
    <property type="entry name" value="GIY-YIG_UPF0213"/>
    <property type="match status" value="1"/>
</dbReference>
<dbReference type="Gene3D" id="3.40.1440.10">
    <property type="entry name" value="GIY-YIG endonuclease"/>
    <property type="match status" value="1"/>
</dbReference>
<dbReference type="InterPro" id="IPR000305">
    <property type="entry name" value="GIY-YIG_endonuc"/>
</dbReference>
<dbReference type="InterPro" id="IPR035901">
    <property type="entry name" value="GIY-YIG_endonuc_sf"/>
</dbReference>
<dbReference type="InterPro" id="IPR050190">
    <property type="entry name" value="UPF0213_domain"/>
</dbReference>
<dbReference type="PANTHER" id="PTHR34477">
    <property type="entry name" value="UPF0213 PROTEIN YHBQ"/>
    <property type="match status" value="1"/>
</dbReference>
<dbReference type="PANTHER" id="PTHR34477:SF1">
    <property type="entry name" value="UPF0213 PROTEIN YHBQ"/>
    <property type="match status" value="1"/>
</dbReference>
<dbReference type="Pfam" id="PF01541">
    <property type="entry name" value="GIY-YIG"/>
    <property type="match status" value="1"/>
</dbReference>
<dbReference type="SUPFAM" id="SSF82771">
    <property type="entry name" value="GIY-YIG endonuclease"/>
    <property type="match status" value="1"/>
</dbReference>
<dbReference type="PROSITE" id="PS50164">
    <property type="entry name" value="GIY_YIG"/>
    <property type="match status" value="1"/>
</dbReference>
<name>Y875_PEDPA</name>
<protein>
    <recommendedName>
        <fullName>UPF0213 protein PEPE_0875</fullName>
    </recommendedName>
</protein>
<accession>Q03FT8</accession>